<protein>
    <recommendedName>
        <fullName>Putative peptide transport system permease protein BRA1092/BS1330_II1084</fullName>
    </recommendedName>
</protein>
<name>Y1092_BRUSU</name>
<comment type="function">
    <text evidence="1">Probably part of an ABC transporter complex that could be involved in peptide import. Probably responsible for the translocation of the substrate across the membrane (By similarity).</text>
</comment>
<comment type="subunit">
    <text evidence="3">The complex is composed of two ATP-binding proteins (BRA1094), two transmembrane proteins (BRA1092 and BRA1093) and a solute-binding protein (BRA1090).</text>
</comment>
<comment type="subcellular location">
    <subcellularLocation>
        <location evidence="3">Cell inner membrane</location>
        <topology evidence="2">Multi-pass membrane protein</topology>
    </subcellularLocation>
</comment>
<comment type="similarity">
    <text evidence="3">Belongs to the binding-protein-dependent transport system permease family.</text>
</comment>
<gene>
    <name type="ordered locus">BRA1092</name>
    <name type="ordered locus">BS1330_II1084</name>
</gene>
<proteinExistence type="inferred from homology"/>
<keyword id="KW-0997">Cell inner membrane</keyword>
<keyword id="KW-1003">Cell membrane</keyword>
<keyword id="KW-0472">Membrane</keyword>
<keyword id="KW-0812">Transmembrane</keyword>
<keyword id="KW-1133">Transmembrane helix</keyword>
<keyword id="KW-0813">Transport</keyword>
<organism>
    <name type="scientific">Brucella suis biovar 1 (strain 1330)</name>
    <dbReference type="NCBI Taxonomy" id="204722"/>
    <lineage>
        <taxon>Bacteria</taxon>
        <taxon>Pseudomonadati</taxon>
        <taxon>Pseudomonadota</taxon>
        <taxon>Alphaproteobacteria</taxon>
        <taxon>Hyphomicrobiales</taxon>
        <taxon>Brucellaceae</taxon>
        <taxon>Brucella/Ochrobactrum group</taxon>
        <taxon>Brucella</taxon>
    </lineage>
</organism>
<accession>Q8FUX0</accession>
<accession>G0KE96</accession>
<sequence>MTALILKRVAQAIPVMLIVAILTFLLMKLLPGDPAILIAGDGASPETVERIRVELGLDQPTVVQLGQWLWNLFHFDLGRSFLLSQPVSQAIAERLPVTISLALLAFAITIPVGIIMGVVAAYLRDSWFDMGVMSLALLGVSVPSFWLAILAVILFSVTLGWFPSAGYVPFLDSPLGWLRSLILPASILALFQIGYLARMTRSEMLEVMDQDYIRTARSKGVSEYSVLSTHAFRNALVSVLTVSGYIFSLLIGGSVVIEQIFALPGLGRLLVQAILARDLPVVQGTMLFLGFLFVAINVLVDILYTIADPRVHYD</sequence>
<evidence type="ECO:0000250" key="1"/>
<evidence type="ECO:0000255" key="2">
    <source>
        <dbReference type="PROSITE-ProRule" id="PRU00441"/>
    </source>
</evidence>
<evidence type="ECO:0000305" key="3"/>
<dbReference type="EMBL" id="AE014292">
    <property type="protein sequence ID" value="AAN34257.1"/>
    <property type="molecule type" value="Genomic_DNA"/>
</dbReference>
<dbReference type="EMBL" id="CP002998">
    <property type="protein sequence ID" value="AEM20534.1"/>
    <property type="molecule type" value="Genomic_DNA"/>
</dbReference>
<dbReference type="RefSeq" id="WP_006192294.1">
    <property type="nucleotide sequence ID" value="NZ_KN046805.1"/>
</dbReference>
<dbReference type="SMR" id="Q8FUX0"/>
<dbReference type="GeneID" id="45054073"/>
<dbReference type="KEGG" id="bms:BRA1092"/>
<dbReference type="KEGG" id="bsi:BS1330_II1084"/>
<dbReference type="PATRIC" id="fig|204722.22.peg.2681"/>
<dbReference type="HOGENOM" id="CLU_036879_0_1_5"/>
<dbReference type="Proteomes" id="UP000007104">
    <property type="component" value="Chromosome II"/>
</dbReference>
<dbReference type="GO" id="GO:0005886">
    <property type="term" value="C:plasma membrane"/>
    <property type="evidence" value="ECO:0007669"/>
    <property type="project" value="UniProtKB-SubCell"/>
</dbReference>
<dbReference type="GO" id="GO:0071916">
    <property type="term" value="F:dipeptide transmembrane transporter activity"/>
    <property type="evidence" value="ECO:0007669"/>
    <property type="project" value="TreeGrafter"/>
</dbReference>
<dbReference type="CDD" id="cd06261">
    <property type="entry name" value="TM_PBP2"/>
    <property type="match status" value="1"/>
</dbReference>
<dbReference type="Gene3D" id="1.10.3720.10">
    <property type="entry name" value="MetI-like"/>
    <property type="match status" value="1"/>
</dbReference>
<dbReference type="InterPro" id="IPR045621">
    <property type="entry name" value="BPD_transp_1_N"/>
</dbReference>
<dbReference type="InterPro" id="IPR000515">
    <property type="entry name" value="MetI-like"/>
</dbReference>
<dbReference type="InterPro" id="IPR035906">
    <property type="entry name" value="MetI-like_sf"/>
</dbReference>
<dbReference type="PANTHER" id="PTHR43163">
    <property type="entry name" value="DIPEPTIDE TRANSPORT SYSTEM PERMEASE PROTEIN DPPB-RELATED"/>
    <property type="match status" value="1"/>
</dbReference>
<dbReference type="PANTHER" id="PTHR43163:SF6">
    <property type="entry name" value="DIPEPTIDE TRANSPORT SYSTEM PERMEASE PROTEIN DPPB-RELATED"/>
    <property type="match status" value="1"/>
</dbReference>
<dbReference type="Pfam" id="PF00528">
    <property type="entry name" value="BPD_transp_1"/>
    <property type="match status" value="1"/>
</dbReference>
<dbReference type="Pfam" id="PF19300">
    <property type="entry name" value="BPD_transp_1_N"/>
    <property type="match status" value="1"/>
</dbReference>
<dbReference type="SUPFAM" id="SSF161098">
    <property type="entry name" value="MetI-like"/>
    <property type="match status" value="1"/>
</dbReference>
<dbReference type="PROSITE" id="PS50928">
    <property type="entry name" value="ABC_TM1"/>
    <property type="match status" value="1"/>
</dbReference>
<feature type="chain" id="PRO_0000290152" description="Putative peptide transport system permease protein BRA1092/BS1330_II1084">
    <location>
        <begin position="1"/>
        <end position="314"/>
    </location>
</feature>
<feature type="transmembrane region" description="Helical" evidence="2">
    <location>
        <begin position="12"/>
        <end position="32"/>
    </location>
</feature>
<feature type="transmembrane region" description="Helical" evidence="2">
    <location>
        <begin position="101"/>
        <end position="121"/>
    </location>
</feature>
<feature type="transmembrane region" description="Helical" evidence="2">
    <location>
        <begin position="135"/>
        <end position="155"/>
    </location>
</feature>
<feature type="transmembrane region" description="Helical" evidence="2">
    <location>
        <begin position="177"/>
        <end position="197"/>
    </location>
</feature>
<feature type="transmembrane region" description="Helical" evidence="2">
    <location>
        <begin position="237"/>
        <end position="257"/>
    </location>
</feature>
<feature type="transmembrane region" description="Helical" evidence="2">
    <location>
        <begin position="286"/>
        <end position="306"/>
    </location>
</feature>
<feature type="domain" description="ABC transmembrane type-1" evidence="2">
    <location>
        <begin position="95"/>
        <end position="304"/>
    </location>
</feature>
<reference key="1">
    <citation type="journal article" date="2002" name="Proc. Natl. Acad. Sci. U.S.A.">
        <title>The Brucella suis genome reveals fundamental similarities between animal and plant pathogens and symbionts.</title>
        <authorList>
            <person name="Paulsen I.T."/>
            <person name="Seshadri R."/>
            <person name="Nelson K.E."/>
            <person name="Eisen J.A."/>
            <person name="Heidelberg J.F."/>
            <person name="Read T.D."/>
            <person name="Dodson R.J."/>
            <person name="Umayam L.A."/>
            <person name="Brinkac L.M."/>
            <person name="Beanan M.J."/>
            <person name="Daugherty S.C."/>
            <person name="DeBoy R.T."/>
            <person name="Durkin A.S."/>
            <person name="Kolonay J.F."/>
            <person name="Madupu R."/>
            <person name="Nelson W.C."/>
            <person name="Ayodeji B."/>
            <person name="Kraul M."/>
            <person name="Shetty J."/>
            <person name="Malek J.A."/>
            <person name="Van Aken S.E."/>
            <person name="Riedmuller S."/>
            <person name="Tettelin H."/>
            <person name="Gill S.R."/>
            <person name="White O."/>
            <person name="Salzberg S.L."/>
            <person name="Hoover D.L."/>
            <person name="Lindler L.E."/>
            <person name="Halling S.M."/>
            <person name="Boyle S.M."/>
            <person name="Fraser C.M."/>
        </authorList>
    </citation>
    <scope>NUCLEOTIDE SEQUENCE [LARGE SCALE GENOMIC DNA]</scope>
    <source>
        <strain>1330</strain>
    </source>
</reference>
<reference key="2">
    <citation type="journal article" date="2011" name="J. Bacteriol.">
        <title>Revised genome sequence of Brucella suis 1330.</title>
        <authorList>
            <person name="Tae H."/>
            <person name="Shallom S."/>
            <person name="Settlage R."/>
            <person name="Preston D."/>
            <person name="Adams L.G."/>
            <person name="Garner H.R."/>
        </authorList>
    </citation>
    <scope>NUCLEOTIDE SEQUENCE [LARGE SCALE GENOMIC DNA]</scope>
    <source>
        <strain>1330</strain>
    </source>
</reference>